<sequence length="58" mass="6972">MSKTVVRKNESLDDALRRFKRSVTKAGTLQESRKREFYEKPSVKRKRKSEAARKRKKF</sequence>
<keyword id="KW-0687">Ribonucleoprotein</keyword>
<keyword id="KW-0689">Ribosomal protein</keyword>
<gene>
    <name evidence="1" type="primary">rpsU</name>
    <name type="ordered locus">gbs1499</name>
</gene>
<feature type="chain" id="PRO_0000178387" description="Small ribosomal subunit protein bS21">
    <location>
        <begin position="1"/>
        <end position="58"/>
    </location>
</feature>
<feature type="region of interest" description="Disordered" evidence="2">
    <location>
        <begin position="36"/>
        <end position="58"/>
    </location>
</feature>
<feature type="compositionally biased region" description="Basic residues" evidence="2">
    <location>
        <begin position="43"/>
        <end position="58"/>
    </location>
</feature>
<proteinExistence type="inferred from homology"/>
<organism>
    <name type="scientific">Streptococcus agalactiae serotype III (strain NEM316)</name>
    <dbReference type="NCBI Taxonomy" id="211110"/>
    <lineage>
        <taxon>Bacteria</taxon>
        <taxon>Bacillati</taxon>
        <taxon>Bacillota</taxon>
        <taxon>Bacilli</taxon>
        <taxon>Lactobacillales</taxon>
        <taxon>Streptococcaceae</taxon>
        <taxon>Streptococcus</taxon>
    </lineage>
</organism>
<comment type="similarity">
    <text evidence="1">Belongs to the bacterial ribosomal protein bS21 family.</text>
</comment>
<reference key="1">
    <citation type="journal article" date="2002" name="Mol. Microbiol.">
        <title>Genome sequence of Streptococcus agalactiae, a pathogen causing invasive neonatal disease.</title>
        <authorList>
            <person name="Glaser P."/>
            <person name="Rusniok C."/>
            <person name="Buchrieser C."/>
            <person name="Chevalier F."/>
            <person name="Frangeul L."/>
            <person name="Msadek T."/>
            <person name="Zouine M."/>
            <person name="Couve E."/>
            <person name="Lalioui L."/>
            <person name="Poyart C."/>
            <person name="Trieu-Cuot P."/>
            <person name="Kunst F."/>
        </authorList>
    </citation>
    <scope>NUCLEOTIDE SEQUENCE [LARGE SCALE GENOMIC DNA]</scope>
    <source>
        <strain>NEM316</strain>
    </source>
</reference>
<name>RS21_STRA3</name>
<dbReference type="EMBL" id="AL766851">
    <property type="protein sequence ID" value="CAD47158.1"/>
    <property type="molecule type" value="Genomic_DNA"/>
</dbReference>
<dbReference type="RefSeq" id="WP_000048058.1">
    <property type="nucleotide sequence ID" value="NC_004368.1"/>
</dbReference>
<dbReference type="SMR" id="P66529"/>
<dbReference type="GeneID" id="93936799"/>
<dbReference type="KEGG" id="san:rpsU"/>
<dbReference type="eggNOG" id="COG0828">
    <property type="taxonomic scope" value="Bacteria"/>
</dbReference>
<dbReference type="HOGENOM" id="CLU_159258_3_2_9"/>
<dbReference type="Proteomes" id="UP000000823">
    <property type="component" value="Chromosome"/>
</dbReference>
<dbReference type="GO" id="GO:1990904">
    <property type="term" value="C:ribonucleoprotein complex"/>
    <property type="evidence" value="ECO:0007669"/>
    <property type="project" value="UniProtKB-KW"/>
</dbReference>
<dbReference type="GO" id="GO:0005840">
    <property type="term" value="C:ribosome"/>
    <property type="evidence" value="ECO:0007669"/>
    <property type="project" value="UniProtKB-KW"/>
</dbReference>
<dbReference type="GO" id="GO:0003735">
    <property type="term" value="F:structural constituent of ribosome"/>
    <property type="evidence" value="ECO:0007669"/>
    <property type="project" value="InterPro"/>
</dbReference>
<dbReference type="GO" id="GO:0006412">
    <property type="term" value="P:translation"/>
    <property type="evidence" value="ECO:0007669"/>
    <property type="project" value="UniProtKB-UniRule"/>
</dbReference>
<dbReference type="Gene3D" id="1.20.5.1150">
    <property type="entry name" value="Ribosomal protein S8"/>
    <property type="match status" value="1"/>
</dbReference>
<dbReference type="HAMAP" id="MF_00358">
    <property type="entry name" value="Ribosomal_bS21"/>
    <property type="match status" value="1"/>
</dbReference>
<dbReference type="InterPro" id="IPR001911">
    <property type="entry name" value="Ribosomal_bS21"/>
</dbReference>
<dbReference type="InterPro" id="IPR018278">
    <property type="entry name" value="Ribosomal_bS21_CS"/>
</dbReference>
<dbReference type="InterPro" id="IPR038380">
    <property type="entry name" value="Ribosomal_bS21_sf"/>
</dbReference>
<dbReference type="NCBIfam" id="TIGR00030">
    <property type="entry name" value="S21p"/>
    <property type="match status" value="1"/>
</dbReference>
<dbReference type="PANTHER" id="PTHR21109">
    <property type="entry name" value="MITOCHONDRIAL 28S RIBOSOMAL PROTEIN S21"/>
    <property type="match status" value="1"/>
</dbReference>
<dbReference type="PANTHER" id="PTHR21109:SF22">
    <property type="entry name" value="SMALL RIBOSOMAL SUBUNIT PROTEIN BS21"/>
    <property type="match status" value="1"/>
</dbReference>
<dbReference type="Pfam" id="PF01165">
    <property type="entry name" value="Ribosomal_S21"/>
    <property type="match status" value="1"/>
</dbReference>
<dbReference type="PRINTS" id="PR00976">
    <property type="entry name" value="RIBOSOMALS21"/>
</dbReference>
<dbReference type="PROSITE" id="PS01181">
    <property type="entry name" value="RIBOSOMAL_S21"/>
    <property type="match status" value="1"/>
</dbReference>
<accession>P66529</accession>
<accession>Q9A0H1</accession>
<protein>
    <recommendedName>
        <fullName evidence="1">Small ribosomal subunit protein bS21</fullName>
    </recommendedName>
    <alternativeName>
        <fullName evidence="3">30S ribosomal protein S21</fullName>
    </alternativeName>
</protein>
<evidence type="ECO:0000255" key="1">
    <source>
        <dbReference type="HAMAP-Rule" id="MF_00358"/>
    </source>
</evidence>
<evidence type="ECO:0000256" key="2">
    <source>
        <dbReference type="SAM" id="MobiDB-lite"/>
    </source>
</evidence>
<evidence type="ECO:0000305" key="3"/>